<proteinExistence type="inferred from homology"/>
<protein>
    <recommendedName>
        <fullName evidence="1">ATP-dependent lipid A-core flippase 1</fullName>
        <ecNumber evidence="1">7.5.2.6</ecNumber>
    </recommendedName>
    <alternativeName>
        <fullName evidence="1">Lipid A export ATP-binding/permease protein MsbA 1</fullName>
    </alternativeName>
</protein>
<keyword id="KW-0067">ATP-binding</keyword>
<keyword id="KW-0997">Cell inner membrane</keyword>
<keyword id="KW-1003">Cell membrane</keyword>
<keyword id="KW-0445">Lipid transport</keyword>
<keyword id="KW-0472">Membrane</keyword>
<keyword id="KW-0547">Nucleotide-binding</keyword>
<keyword id="KW-1278">Translocase</keyword>
<keyword id="KW-0812">Transmembrane</keyword>
<keyword id="KW-1133">Transmembrane helix</keyword>
<keyword id="KW-0813">Transport</keyword>
<sequence>MASSPKTNALSSSDSANATTWQNFKRLVSYAKPYKLGFVAAIIGMLGYAAIDVYFLSQLKPLVDEGLSGANANFMKWAPLFIIVAFTVRGIAHFIANYCLAWVGNNVVADLRQKLFEHIMSMPVAFHDQTSTGSLISKITFDTEQVLNSVSKSILTIVQQSAFIIGLLGLMFYYSWQLSLIFLLITPIIAVIVSVVSKRFRKVSKNIQGAMGEVTTAAEQTFNGHKVVLTFGGQQREFSRFAKINKHNRQQRMKMRATKSASVPIIQVIASFALAFVFYAITSDSLRDSISPGTFVSIITYMTMLLRPLKMLTNVNSEFQQGMAACTSIFSILDHEKEKDNGDKQLERASGTLSFKHVDFSYKNTNTMTTSDKEQDTKLALNDITFDLAPGETLALVGRSGSGKSTASSLLLRFYDATRGEILIDDTNIEQFQLKDLRKQFSYVSQQVVLFNDTLANNIAYGKPEATEAEIIEAAKSAHVMEFAEHMEQGLETNIGENGALLSGGQRQRVAIARALLCDTPFLILDEATSALDTESERHIQDALQTLQQNRTSIVIAHRLSTIENADKIIVMEQGKIVEQGNHQSLLAKQGAYAQLHSFQFE</sequence>
<dbReference type="EC" id="7.5.2.6" evidence="1"/>
<dbReference type="EMBL" id="CP000083">
    <property type="protein sequence ID" value="AAZ24386.1"/>
    <property type="molecule type" value="Genomic_DNA"/>
</dbReference>
<dbReference type="RefSeq" id="WP_011042945.1">
    <property type="nucleotide sequence ID" value="NC_003910.7"/>
</dbReference>
<dbReference type="SMR" id="Q483B6"/>
<dbReference type="STRING" id="167879.CPS_2125"/>
<dbReference type="KEGG" id="cps:CPS_2125"/>
<dbReference type="eggNOG" id="COG1132">
    <property type="taxonomic scope" value="Bacteria"/>
</dbReference>
<dbReference type="HOGENOM" id="CLU_000604_84_4_6"/>
<dbReference type="Proteomes" id="UP000000547">
    <property type="component" value="Chromosome"/>
</dbReference>
<dbReference type="GO" id="GO:0005886">
    <property type="term" value="C:plasma membrane"/>
    <property type="evidence" value="ECO:0007669"/>
    <property type="project" value="UniProtKB-SubCell"/>
</dbReference>
<dbReference type="GO" id="GO:0015421">
    <property type="term" value="F:ABC-type oligopeptide transporter activity"/>
    <property type="evidence" value="ECO:0007669"/>
    <property type="project" value="TreeGrafter"/>
</dbReference>
<dbReference type="GO" id="GO:0005524">
    <property type="term" value="F:ATP binding"/>
    <property type="evidence" value="ECO:0007669"/>
    <property type="project" value="UniProtKB-KW"/>
</dbReference>
<dbReference type="GO" id="GO:0016887">
    <property type="term" value="F:ATP hydrolysis activity"/>
    <property type="evidence" value="ECO:0007669"/>
    <property type="project" value="InterPro"/>
</dbReference>
<dbReference type="GO" id="GO:0034040">
    <property type="term" value="F:ATPase-coupled lipid transmembrane transporter activity"/>
    <property type="evidence" value="ECO:0007669"/>
    <property type="project" value="InterPro"/>
</dbReference>
<dbReference type="CDD" id="cd18552">
    <property type="entry name" value="ABC_6TM_MsbA_like"/>
    <property type="match status" value="1"/>
</dbReference>
<dbReference type="FunFam" id="3.40.50.300:FF:000140">
    <property type="entry name" value="Lipid A export ATP-binding/permease protein MsbA"/>
    <property type="match status" value="1"/>
</dbReference>
<dbReference type="Gene3D" id="1.20.1560.10">
    <property type="entry name" value="ABC transporter type 1, transmembrane domain"/>
    <property type="match status" value="1"/>
</dbReference>
<dbReference type="Gene3D" id="3.40.50.300">
    <property type="entry name" value="P-loop containing nucleotide triphosphate hydrolases"/>
    <property type="match status" value="1"/>
</dbReference>
<dbReference type="InterPro" id="IPR003593">
    <property type="entry name" value="AAA+_ATPase"/>
</dbReference>
<dbReference type="InterPro" id="IPR011527">
    <property type="entry name" value="ABC1_TM_dom"/>
</dbReference>
<dbReference type="InterPro" id="IPR036640">
    <property type="entry name" value="ABC1_TM_sf"/>
</dbReference>
<dbReference type="InterPro" id="IPR003439">
    <property type="entry name" value="ABC_transporter-like_ATP-bd"/>
</dbReference>
<dbReference type="InterPro" id="IPR017871">
    <property type="entry name" value="ABC_transporter-like_CS"/>
</dbReference>
<dbReference type="InterPro" id="IPR011917">
    <property type="entry name" value="ABC_transpr_lipidA"/>
</dbReference>
<dbReference type="InterPro" id="IPR027417">
    <property type="entry name" value="P-loop_NTPase"/>
</dbReference>
<dbReference type="InterPro" id="IPR039421">
    <property type="entry name" value="Type_1_exporter"/>
</dbReference>
<dbReference type="NCBIfam" id="TIGR02203">
    <property type="entry name" value="MsbA_lipidA"/>
    <property type="match status" value="1"/>
</dbReference>
<dbReference type="PANTHER" id="PTHR43394:SF1">
    <property type="entry name" value="ATP-BINDING CASSETTE SUB-FAMILY B MEMBER 10, MITOCHONDRIAL"/>
    <property type="match status" value="1"/>
</dbReference>
<dbReference type="PANTHER" id="PTHR43394">
    <property type="entry name" value="ATP-DEPENDENT PERMEASE MDL1, MITOCHONDRIAL"/>
    <property type="match status" value="1"/>
</dbReference>
<dbReference type="Pfam" id="PF00664">
    <property type="entry name" value="ABC_membrane"/>
    <property type="match status" value="1"/>
</dbReference>
<dbReference type="Pfam" id="PF00005">
    <property type="entry name" value="ABC_tran"/>
    <property type="match status" value="1"/>
</dbReference>
<dbReference type="SMART" id="SM00382">
    <property type="entry name" value="AAA"/>
    <property type="match status" value="1"/>
</dbReference>
<dbReference type="SUPFAM" id="SSF90123">
    <property type="entry name" value="ABC transporter transmembrane region"/>
    <property type="match status" value="1"/>
</dbReference>
<dbReference type="SUPFAM" id="SSF52540">
    <property type="entry name" value="P-loop containing nucleoside triphosphate hydrolases"/>
    <property type="match status" value="1"/>
</dbReference>
<dbReference type="PROSITE" id="PS50929">
    <property type="entry name" value="ABC_TM1F"/>
    <property type="match status" value="1"/>
</dbReference>
<dbReference type="PROSITE" id="PS00211">
    <property type="entry name" value="ABC_TRANSPORTER_1"/>
    <property type="match status" value="1"/>
</dbReference>
<dbReference type="PROSITE" id="PS50893">
    <property type="entry name" value="ABC_TRANSPORTER_2"/>
    <property type="match status" value="1"/>
</dbReference>
<dbReference type="PROSITE" id="PS51239">
    <property type="entry name" value="MSBA"/>
    <property type="match status" value="1"/>
</dbReference>
<gene>
    <name evidence="1" type="primary">msbA1</name>
    <name type="ordered locus">CPS_2125</name>
</gene>
<organism>
    <name type="scientific">Colwellia psychrerythraea (strain 34H / ATCC BAA-681)</name>
    <name type="common">Vibrio psychroerythus</name>
    <dbReference type="NCBI Taxonomy" id="167879"/>
    <lineage>
        <taxon>Bacteria</taxon>
        <taxon>Pseudomonadati</taxon>
        <taxon>Pseudomonadota</taxon>
        <taxon>Gammaproteobacteria</taxon>
        <taxon>Alteromonadales</taxon>
        <taxon>Colwelliaceae</taxon>
        <taxon>Colwellia</taxon>
    </lineage>
</organism>
<name>MSBA1_COLP3</name>
<comment type="function">
    <text evidence="1">Involved in lipopolysaccharide (LPS) biosynthesis. Translocates lipid A-core from the inner to the outer leaflet of the inner membrane. Transmembrane domains (TMD) form a pore in the inner membrane and the ATP-binding domain (NBD) is responsible for energy generation.</text>
</comment>
<comment type="catalytic activity">
    <reaction evidence="1">
        <text>ATP + H2O + lipid A-core oligosaccharideSide 1 = ADP + phosphate + lipid A-core oligosaccharideSide 2.</text>
        <dbReference type="EC" id="7.5.2.6"/>
    </reaction>
</comment>
<comment type="subunit">
    <text evidence="1">Homodimer.</text>
</comment>
<comment type="subcellular location">
    <subcellularLocation>
        <location evidence="1">Cell inner membrane</location>
        <topology evidence="1">Multi-pass membrane protein</topology>
    </subcellularLocation>
</comment>
<comment type="domain">
    <text evidence="1">In MsbA the ATP-binding domain (NBD) and the transmembrane domain (TMD) are fused.</text>
</comment>
<comment type="similarity">
    <text evidence="1">Belongs to the ABC transporter superfamily. Lipid exporter (TC 3.A.1.106) family.</text>
</comment>
<accession>Q483B6</accession>
<evidence type="ECO:0000255" key="1">
    <source>
        <dbReference type="HAMAP-Rule" id="MF_01703"/>
    </source>
</evidence>
<reference key="1">
    <citation type="journal article" date="2005" name="Proc. Natl. Acad. Sci. U.S.A.">
        <title>The psychrophilic lifestyle as revealed by the genome sequence of Colwellia psychrerythraea 34H through genomic and proteomic analyses.</title>
        <authorList>
            <person name="Methe B.A."/>
            <person name="Nelson K.E."/>
            <person name="Deming J.W."/>
            <person name="Momen B."/>
            <person name="Melamud E."/>
            <person name="Zhang X."/>
            <person name="Moult J."/>
            <person name="Madupu R."/>
            <person name="Nelson W.C."/>
            <person name="Dodson R.J."/>
            <person name="Brinkac L.M."/>
            <person name="Daugherty S.C."/>
            <person name="Durkin A.S."/>
            <person name="DeBoy R.T."/>
            <person name="Kolonay J.F."/>
            <person name="Sullivan S.A."/>
            <person name="Zhou L."/>
            <person name="Davidsen T.M."/>
            <person name="Wu M."/>
            <person name="Huston A.L."/>
            <person name="Lewis M."/>
            <person name="Weaver B."/>
            <person name="Weidman J.F."/>
            <person name="Khouri H."/>
            <person name="Utterback T.R."/>
            <person name="Feldblyum T.V."/>
            <person name="Fraser C.M."/>
        </authorList>
    </citation>
    <scope>NUCLEOTIDE SEQUENCE [LARGE SCALE GENOMIC DNA]</scope>
    <source>
        <strain>34H / ATCC BAA-681</strain>
    </source>
</reference>
<feature type="chain" id="PRO_0000271621" description="ATP-dependent lipid A-core flippase 1">
    <location>
        <begin position="1"/>
        <end position="602"/>
    </location>
</feature>
<feature type="transmembrane region" description="Helical" evidence="1">
    <location>
        <begin position="36"/>
        <end position="56"/>
    </location>
</feature>
<feature type="transmembrane region" description="Helical" evidence="1">
    <location>
        <begin position="80"/>
        <end position="100"/>
    </location>
</feature>
<feature type="transmembrane region" description="Helical" evidence="1">
    <location>
        <begin position="154"/>
        <end position="174"/>
    </location>
</feature>
<feature type="transmembrane region" description="Helical" evidence="1">
    <location>
        <begin position="176"/>
        <end position="196"/>
    </location>
</feature>
<feature type="transmembrane region" description="Helical" evidence="1">
    <location>
        <begin position="261"/>
        <end position="281"/>
    </location>
</feature>
<feature type="domain" description="ABC transmembrane type-1" evidence="1">
    <location>
        <begin position="39"/>
        <end position="321"/>
    </location>
</feature>
<feature type="domain" description="ABC transporter" evidence="1">
    <location>
        <begin position="362"/>
        <end position="599"/>
    </location>
</feature>
<feature type="binding site" evidence="1">
    <location>
        <begin position="398"/>
        <end position="405"/>
    </location>
    <ligand>
        <name>ATP</name>
        <dbReference type="ChEBI" id="CHEBI:30616"/>
    </ligand>
</feature>